<name>SYY_STAAR</name>
<evidence type="ECO:0000255" key="1">
    <source>
        <dbReference type="HAMAP-Rule" id="MF_02006"/>
    </source>
</evidence>
<comment type="function">
    <text evidence="1">Catalyzes the attachment of tyrosine to tRNA(Tyr) in a two-step reaction: tyrosine is first activated by ATP to form Tyr-AMP and then transferred to the acceptor end of tRNA(Tyr).</text>
</comment>
<comment type="catalytic activity">
    <reaction evidence="1">
        <text>tRNA(Tyr) + L-tyrosine + ATP = L-tyrosyl-tRNA(Tyr) + AMP + diphosphate + H(+)</text>
        <dbReference type="Rhea" id="RHEA:10220"/>
        <dbReference type="Rhea" id="RHEA-COMP:9706"/>
        <dbReference type="Rhea" id="RHEA-COMP:9707"/>
        <dbReference type="ChEBI" id="CHEBI:15378"/>
        <dbReference type="ChEBI" id="CHEBI:30616"/>
        <dbReference type="ChEBI" id="CHEBI:33019"/>
        <dbReference type="ChEBI" id="CHEBI:58315"/>
        <dbReference type="ChEBI" id="CHEBI:78442"/>
        <dbReference type="ChEBI" id="CHEBI:78536"/>
        <dbReference type="ChEBI" id="CHEBI:456215"/>
        <dbReference type="EC" id="6.1.1.1"/>
    </reaction>
</comment>
<comment type="subunit">
    <text evidence="1">Homodimer.</text>
</comment>
<comment type="subcellular location">
    <subcellularLocation>
        <location evidence="1">Cytoplasm</location>
    </subcellularLocation>
</comment>
<comment type="similarity">
    <text evidence="1">Belongs to the class-I aminoacyl-tRNA synthetase family. TyrS type 1 subfamily.</text>
</comment>
<sequence length="420" mass="47598">MTNVLIEDLKWRGLIYQQTDEQGIEDLLNKEQVTLYCGADPTADSLHIGHLLPFLTLRRFQEHGHRPIVLIGGGTGMIGDPSGKSEERVLQTEEQVDKNIEGISKQMHNIFEFGTDHGAVLVNNRDWLGQISLISFLRDYGKHVGVNYMLGKDSIQSRLEHGISYTEFTYTILQAIDFGHLNRELNCKIQVGGSDQWGNITSGIELMRRMYGQTDAYGLTIPLVTKSDGKKFGKSESGAVWLDAEKTSPYEFYQFWINQSDEDVIKFLKYFTFLGKEEIDRLEQSKNEAPHLREAQKTLAEEVTKFIHGEDALNDAIRISQALFSGDLKSLSAKELKDGFKDVPQVTLSNDTTNIVEVLIETGISPSKRQAREDVNNGAIYINGERQQDVNYALAPEDKIDGEFTIIRRGKKKYFMVNYQ</sequence>
<protein>
    <recommendedName>
        <fullName evidence="1">Tyrosine--tRNA ligase</fullName>
        <ecNumber evidence="1">6.1.1.1</ecNumber>
    </recommendedName>
    <alternativeName>
        <fullName evidence="1">Tyrosyl-tRNA synthetase</fullName>
        <shortName evidence="1">TyrRS</shortName>
    </alternativeName>
</protein>
<keyword id="KW-0030">Aminoacyl-tRNA synthetase</keyword>
<keyword id="KW-0067">ATP-binding</keyword>
<keyword id="KW-0963">Cytoplasm</keyword>
<keyword id="KW-0436">Ligase</keyword>
<keyword id="KW-0547">Nucleotide-binding</keyword>
<keyword id="KW-0648">Protein biosynthesis</keyword>
<keyword id="KW-0694">RNA-binding</keyword>
<organism>
    <name type="scientific">Staphylococcus aureus (strain MRSA252)</name>
    <dbReference type="NCBI Taxonomy" id="282458"/>
    <lineage>
        <taxon>Bacteria</taxon>
        <taxon>Bacillati</taxon>
        <taxon>Bacillota</taxon>
        <taxon>Bacilli</taxon>
        <taxon>Bacillales</taxon>
        <taxon>Staphylococcaceae</taxon>
        <taxon>Staphylococcus</taxon>
    </lineage>
</organism>
<accession>Q6GFX9</accession>
<reference key="1">
    <citation type="journal article" date="2004" name="Proc. Natl. Acad. Sci. U.S.A.">
        <title>Complete genomes of two clinical Staphylococcus aureus strains: evidence for the rapid evolution of virulence and drug resistance.</title>
        <authorList>
            <person name="Holden M.T.G."/>
            <person name="Feil E.J."/>
            <person name="Lindsay J.A."/>
            <person name="Peacock S.J."/>
            <person name="Day N.P.J."/>
            <person name="Enright M.C."/>
            <person name="Foster T.J."/>
            <person name="Moore C.E."/>
            <person name="Hurst L."/>
            <person name="Atkin R."/>
            <person name="Barron A."/>
            <person name="Bason N."/>
            <person name="Bentley S.D."/>
            <person name="Chillingworth C."/>
            <person name="Chillingworth T."/>
            <person name="Churcher C."/>
            <person name="Clark L."/>
            <person name="Corton C."/>
            <person name="Cronin A."/>
            <person name="Doggett J."/>
            <person name="Dowd L."/>
            <person name="Feltwell T."/>
            <person name="Hance Z."/>
            <person name="Harris B."/>
            <person name="Hauser H."/>
            <person name="Holroyd S."/>
            <person name="Jagels K."/>
            <person name="James K.D."/>
            <person name="Lennard N."/>
            <person name="Line A."/>
            <person name="Mayes R."/>
            <person name="Moule S."/>
            <person name="Mungall K."/>
            <person name="Ormond D."/>
            <person name="Quail M.A."/>
            <person name="Rabbinowitsch E."/>
            <person name="Rutherford K.M."/>
            <person name="Sanders M."/>
            <person name="Sharp S."/>
            <person name="Simmonds M."/>
            <person name="Stevens K."/>
            <person name="Whitehead S."/>
            <person name="Barrell B.G."/>
            <person name="Spratt B.G."/>
            <person name="Parkhill J."/>
        </authorList>
    </citation>
    <scope>NUCLEOTIDE SEQUENCE [LARGE SCALE GENOMIC DNA]</scope>
    <source>
        <strain>MRSA252</strain>
    </source>
</reference>
<gene>
    <name evidence="1" type="primary">tyrS</name>
    <name type="ordered locus">SAR1806</name>
</gene>
<dbReference type="EC" id="6.1.1.1" evidence="1"/>
<dbReference type="EMBL" id="BX571856">
    <property type="protein sequence ID" value="CAG40797.1"/>
    <property type="molecule type" value="Genomic_DNA"/>
</dbReference>
<dbReference type="RefSeq" id="WP_000186029.1">
    <property type="nucleotide sequence ID" value="NC_002952.2"/>
</dbReference>
<dbReference type="SMR" id="Q6GFX9"/>
<dbReference type="KEGG" id="sar:SAR1806"/>
<dbReference type="HOGENOM" id="CLU_024003_0_3_9"/>
<dbReference type="Proteomes" id="UP000000596">
    <property type="component" value="Chromosome"/>
</dbReference>
<dbReference type="GO" id="GO:0005829">
    <property type="term" value="C:cytosol"/>
    <property type="evidence" value="ECO:0007669"/>
    <property type="project" value="TreeGrafter"/>
</dbReference>
<dbReference type="GO" id="GO:0005524">
    <property type="term" value="F:ATP binding"/>
    <property type="evidence" value="ECO:0007669"/>
    <property type="project" value="UniProtKB-UniRule"/>
</dbReference>
<dbReference type="GO" id="GO:0003723">
    <property type="term" value="F:RNA binding"/>
    <property type="evidence" value="ECO:0007669"/>
    <property type="project" value="UniProtKB-KW"/>
</dbReference>
<dbReference type="GO" id="GO:0004831">
    <property type="term" value="F:tyrosine-tRNA ligase activity"/>
    <property type="evidence" value="ECO:0007669"/>
    <property type="project" value="UniProtKB-UniRule"/>
</dbReference>
<dbReference type="GO" id="GO:0006437">
    <property type="term" value="P:tyrosyl-tRNA aminoacylation"/>
    <property type="evidence" value="ECO:0007669"/>
    <property type="project" value="UniProtKB-UniRule"/>
</dbReference>
<dbReference type="CDD" id="cd00165">
    <property type="entry name" value="S4"/>
    <property type="match status" value="1"/>
</dbReference>
<dbReference type="CDD" id="cd00395">
    <property type="entry name" value="Tyr_Trp_RS_core"/>
    <property type="match status" value="1"/>
</dbReference>
<dbReference type="FunFam" id="1.10.240.10:FF:000001">
    <property type="entry name" value="Tyrosine--tRNA ligase"/>
    <property type="match status" value="1"/>
</dbReference>
<dbReference type="FunFam" id="3.10.290.10:FF:000012">
    <property type="entry name" value="Tyrosine--tRNA ligase"/>
    <property type="match status" value="1"/>
</dbReference>
<dbReference type="FunFam" id="3.40.50.620:FF:000008">
    <property type="entry name" value="Tyrosine--tRNA ligase"/>
    <property type="match status" value="1"/>
</dbReference>
<dbReference type="Gene3D" id="3.40.50.620">
    <property type="entry name" value="HUPs"/>
    <property type="match status" value="1"/>
</dbReference>
<dbReference type="Gene3D" id="3.10.290.10">
    <property type="entry name" value="RNA-binding S4 domain"/>
    <property type="match status" value="1"/>
</dbReference>
<dbReference type="Gene3D" id="1.10.240.10">
    <property type="entry name" value="Tyrosyl-Transfer RNA Synthetase"/>
    <property type="match status" value="1"/>
</dbReference>
<dbReference type="HAMAP" id="MF_02006">
    <property type="entry name" value="Tyr_tRNA_synth_type1"/>
    <property type="match status" value="1"/>
</dbReference>
<dbReference type="InterPro" id="IPR001412">
    <property type="entry name" value="aa-tRNA-synth_I_CS"/>
</dbReference>
<dbReference type="InterPro" id="IPR002305">
    <property type="entry name" value="aa-tRNA-synth_Ic"/>
</dbReference>
<dbReference type="InterPro" id="IPR014729">
    <property type="entry name" value="Rossmann-like_a/b/a_fold"/>
</dbReference>
<dbReference type="InterPro" id="IPR002942">
    <property type="entry name" value="S4_RNA-bd"/>
</dbReference>
<dbReference type="InterPro" id="IPR036986">
    <property type="entry name" value="S4_RNA-bd_sf"/>
</dbReference>
<dbReference type="InterPro" id="IPR054608">
    <property type="entry name" value="SYY-like_C"/>
</dbReference>
<dbReference type="InterPro" id="IPR002307">
    <property type="entry name" value="Tyr-tRNA-ligase"/>
</dbReference>
<dbReference type="InterPro" id="IPR024088">
    <property type="entry name" value="Tyr-tRNA-ligase_bac-type"/>
</dbReference>
<dbReference type="InterPro" id="IPR024107">
    <property type="entry name" value="Tyr-tRNA-ligase_bac_1"/>
</dbReference>
<dbReference type="NCBIfam" id="TIGR00234">
    <property type="entry name" value="tyrS"/>
    <property type="match status" value="1"/>
</dbReference>
<dbReference type="PANTHER" id="PTHR11766:SF0">
    <property type="entry name" value="TYROSINE--TRNA LIGASE, MITOCHONDRIAL"/>
    <property type="match status" value="1"/>
</dbReference>
<dbReference type="PANTHER" id="PTHR11766">
    <property type="entry name" value="TYROSYL-TRNA SYNTHETASE"/>
    <property type="match status" value="1"/>
</dbReference>
<dbReference type="Pfam" id="PF22421">
    <property type="entry name" value="SYY_C-terminal"/>
    <property type="match status" value="1"/>
</dbReference>
<dbReference type="Pfam" id="PF00579">
    <property type="entry name" value="tRNA-synt_1b"/>
    <property type="match status" value="1"/>
</dbReference>
<dbReference type="PRINTS" id="PR01040">
    <property type="entry name" value="TRNASYNTHTYR"/>
</dbReference>
<dbReference type="SMART" id="SM00363">
    <property type="entry name" value="S4"/>
    <property type="match status" value="1"/>
</dbReference>
<dbReference type="SUPFAM" id="SSF55174">
    <property type="entry name" value="Alpha-L RNA-binding motif"/>
    <property type="match status" value="1"/>
</dbReference>
<dbReference type="SUPFAM" id="SSF52374">
    <property type="entry name" value="Nucleotidylyl transferase"/>
    <property type="match status" value="1"/>
</dbReference>
<dbReference type="PROSITE" id="PS00178">
    <property type="entry name" value="AA_TRNA_LIGASE_I"/>
    <property type="match status" value="1"/>
</dbReference>
<dbReference type="PROSITE" id="PS50889">
    <property type="entry name" value="S4"/>
    <property type="match status" value="1"/>
</dbReference>
<proteinExistence type="inferred from homology"/>
<feature type="chain" id="PRO_0000234774" description="Tyrosine--tRNA ligase">
    <location>
        <begin position="1"/>
        <end position="420"/>
    </location>
</feature>
<feature type="domain" description="S4 RNA-binding" evidence="1">
    <location>
        <begin position="353"/>
        <end position="420"/>
    </location>
</feature>
<feature type="short sequence motif" description="'HIGH' region">
    <location>
        <begin position="41"/>
        <end position="50"/>
    </location>
</feature>
<feature type="short sequence motif" description="'KMSKS' region">
    <location>
        <begin position="231"/>
        <end position="235"/>
    </location>
</feature>
<feature type="binding site" evidence="1">
    <location>
        <position position="36"/>
    </location>
    <ligand>
        <name>L-tyrosine</name>
        <dbReference type="ChEBI" id="CHEBI:58315"/>
    </ligand>
</feature>
<feature type="binding site" evidence="1">
    <location>
        <position position="170"/>
    </location>
    <ligand>
        <name>L-tyrosine</name>
        <dbReference type="ChEBI" id="CHEBI:58315"/>
    </ligand>
</feature>
<feature type="binding site" evidence="1">
    <location>
        <position position="174"/>
    </location>
    <ligand>
        <name>L-tyrosine</name>
        <dbReference type="ChEBI" id="CHEBI:58315"/>
    </ligand>
</feature>
<feature type="binding site" evidence="1">
    <location>
        <position position="234"/>
    </location>
    <ligand>
        <name>ATP</name>
        <dbReference type="ChEBI" id="CHEBI:30616"/>
    </ligand>
</feature>